<organism>
    <name type="scientific">Escherichia coli (strain SE11)</name>
    <dbReference type="NCBI Taxonomy" id="409438"/>
    <lineage>
        <taxon>Bacteria</taxon>
        <taxon>Pseudomonadati</taxon>
        <taxon>Pseudomonadota</taxon>
        <taxon>Gammaproteobacteria</taxon>
        <taxon>Enterobacterales</taxon>
        <taxon>Enterobacteriaceae</taxon>
        <taxon>Escherichia</taxon>
    </lineage>
</organism>
<evidence type="ECO:0000255" key="1">
    <source>
        <dbReference type="HAMAP-Rule" id="MF_01048"/>
    </source>
</evidence>
<reference key="1">
    <citation type="journal article" date="2008" name="DNA Res.">
        <title>Complete genome sequence and comparative analysis of the wild-type commensal Escherichia coli strain SE11 isolated from a healthy adult.</title>
        <authorList>
            <person name="Oshima K."/>
            <person name="Toh H."/>
            <person name="Ogura Y."/>
            <person name="Sasamoto H."/>
            <person name="Morita H."/>
            <person name="Park S.-H."/>
            <person name="Ooka T."/>
            <person name="Iyoda S."/>
            <person name="Taylor T.D."/>
            <person name="Hayashi T."/>
            <person name="Itoh K."/>
            <person name="Hattori M."/>
        </authorList>
    </citation>
    <scope>NUCLEOTIDE SEQUENCE [LARGE SCALE GENOMIC DNA]</scope>
    <source>
        <strain>SE11</strain>
    </source>
</reference>
<feature type="chain" id="PRO_1000136213" description="Protein PsiE">
    <location>
        <begin position="1"/>
        <end position="136"/>
    </location>
</feature>
<feature type="transmembrane region" description="Helical" evidence="1">
    <location>
        <begin position="15"/>
        <end position="35"/>
    </location>
</feature>
<feature type="transmembrane region" description="Helical" evidence="1">
    <location>
        <begin position="55"/>
        <end position="75"/>
    </location>
</feature>
<feature type="transmembrane region" description="Helical" evidence="1">
    <location>
        <begin position="82"/>
        <end position="102"/>
    </location>
</feature>
<feature type="transmembrane region" description="Helical" evidence="1">
    <location>
        <begin position="108"/>
        <end position="128"/>
    </location>
</feature>
<accession>B6I5P4</accession>
<proteinExistence type="inferred from homology"/>
<sequence length="136" mass="15597">MTSLSRPRVEFISTILQTVLNLGLLCLGLILVVFLGKETVHLADVLFAPEQTSKYELVEGLVVYFLYFEFIALIVKYFQSGFHFPLRYFVYIGITAIVRLIIVDHKSPLDVLIYSAAILLLVITLWLCNSKRLKRE</sequence>
<gene>
    <name evidence="1" type="primary">psiE</name>
    <name type="ordered locus">ECSE_4321</name>
</gene>
<protein>
    <recommendedName>
        <fullName evidence="1">Protein PsiE</fullName>
    </recommendedName>
</protein>
<dbReference type="EMBL" id="AP009240">
    <property type="protein sequence ID" value="BAG79845.1"/>
    <property type="molecule type" value="Genomic_DNA"/>
</dbReference>
<dbReference type="RefSeq" id="WP_000202902.1">
    <property type="nucleotide sequence ID" value="NC_011415.1"/>
</dbReference>
<dbReference type="SMR" id="B6I5P4"/>
<dbReference type="GeneID" id="93777857"/>
<dbReference type="KEGG" id="ecy:ECSE_4321"/>
<dbReference type="HOGENOM" id="CLU_127561_0_1_6"/>
<dbReference type="Proteomes" id="UP000008199">
    <property type="component" value="Chromosome"/>
</dbReference>
<dbReference type="GO" id="GO:0005886">
    <property type="term" value="C:plasma membrane"/>
    <property type="evidence" value="ECO:0007669"/>
    <property type="project" value="UniProtKB-SubCell"/>
</dbReference>
<dbReference type="GO" id="GO:0016036">
    <property type="term" value="P:cellular response to phosphate starvation"/>
    <property type="evidence" value="ECO:0007669"/>
    <property type="project" value="InterPro"/>
</dbReference>
<dbReference type="HAMAP" id="MF_01048">
    <property type="entry name" value="PsiE"/>
    <property type="match status" value="1"/>
</dbReference>
<dbReference type="InterPro" id="IPR009315">
    <property type="entry name" value="P_starv_induced_PsiE"/>
</dbReference>
<dbReference type="InterPro" id="IPR020948">
    <property type="entry name" value="P_starv_induced_PsiE-like"/>
</dbReference>
<dbReference type="NCBIfam" id="NF002764">
    <property type="entry name" value="PRK02833.1-2"/>
    <property type="match status" value="1"/>
</dbReference>
<dbReference type="NCBIfam" id="NF002765">
    <property type="entry name" value="PRK02833.1-3"/>
    <property type="match status" value="1"/>
</dbReference>
<dbReference type="NCBIfam" id="NF002767">
    <property type="entry name" value="PRK02833.1-5"/>
    <property type="match status" value="1"/>
</dbReference>
<dbReference type="PANTHER" id="PTHR37819">
    <property type="entry name" value="PROTEIN PSIE"/>
    <property type="match status" value="1"/>
</dbReference>
<dbReference type="PANTHER" id="PTHR37819:SF1">
    <property type="entry name" value="PROTEIN PSIE"/>
    <property type="match status" value="1"/>
</dbReference>
<dbReference type="Pfam" id="PF06146">
    <property type="entry name" value="PsiE"/>
    <property type="match status" value="1"/>
</dbReference>
<dbReference type="PIRSF" id="PIRSF029598">
    <property type="entry name" value="PsiE"/>
    <property type="match status" value="1"/>
</dbReference>
<comment type="subcellular location">
    <subcellularLocation>
        <location evidence="1">Cell inner membrane</location>
        <topology evidence="1">Multi-pass membrane protein</topology>
    </subcellularLocation>
</comment>
<comment type="similarity">
    <text evidence="1">Belongs to the PsiE family.</text>
</comment>
<keyword id="KW-0997">Cell inner membrane</keyword>
<keyword id="KW-1003">Cell membrane</keyword>
<keyword id="KW-0472">Membrane</keyword>
<keyword id="KW-0812">Transmembrane</keyword>
<keyword id="KW-1133">Transmembrane helix</keyword>
<name>PSIE_ECOSE</name>